<sequence>MAQTQSPLQWLATTLIRGYQIFISPILGPRCRFNPTCSHYAIEAIKVHGTAKGCWFALKRILKCHPLHPGGSDPVPPKNDRCNK</sequence>
<accession>A1RQF0</accession>
<name>YIDD_SHESW</name>
<feature type="chain" id="PRO_1000013132" description="Putative membrane protein insertion efficiency factor">
    <location>
        <begin position="1"/>
        <end position="84"/>
    </location>
</feature>
<gene>
    <name type="ordered locus">Sputw3181_4093</name>
</gene>
<reference key="1">
    <citation type="submission" date="2006-12" db="EMBL/GenBank/DDBJ databases">
        <title>Complete sequence of Shewanella sp. W3-18-1.</title>
        <authorList>
            <consortium name="US DOE Joint Genome Institute"/>
            <person name="Copeland A."/>
            <person name="Lucas S."/>
            <person name="Lapidus A."/>
            <person name="Barry K."/>
            <person name="Detter J.C."/>
            <person name="Glavina del Rio T."/>
            <person name="Hammon N."/>
            <person name="Israni S."/>
            <person name="Dalin E."/>
            <person name="Tice H."/>
            <person name="Pitluck S."/>
            <person name="Chain P."/>
            <person name="Malfatti S."/>
            <person name="Shin M."/>
            <person name="Vergez L."/>
            <person name="Schmutz J."/>
            <person name="Larimer F."/>
            <person name="Land M."/>
            <person name="Hauser L."/>
            <person name="Kyrpides N."/>
            <person name="Lykidis A."/>
            <person name="Tiedje J."/>
            <person name="Richardson P."/>
        </authorList>
    </citation>
    <scope>NUCLEOTIDE SEQUENCE [LARGE SCALE GENOMIC DNA]</scope>
    <source>
        <strain>W3-18-1</strain>
    </source>
</reference>
<dbReference type="EMBL" id="CP000503">
    <property type="protein sequence ID" value="ABM26895.1"/>
    <property type="molecule type" value="Genomic_DNA"/>
</dbReference>
<dbReference type="KEGG" id="shw:Sputw3181_4093"/>
<dbReference type="HOGENOM" id="CLU_144811_5_2_6"/>
<dbReference type="Proteomes" id="UP000002597">
    <property type="component" value="Chromosome"/>
</dbReference>
<dbReference type="GO" id="GO:0005886">
    <property type="term" value="C:plasma membrane"/>
    <property type="evidence" value="ECO:0007669"/>
    <property type="project" value="UniProtKB-SubCell"/>
</dbReference>
<dbReference type="HAMAP" id="MF_00386">
    <property type="entry name" value="UPF0161_YidD"/>
    <property type="match status" value="1"/>
</dbReference>
<dbReference type="InterPro" id="IPR002696">
    <property type="entry name" value="Membr_insert_effic_factor_YidD"/>
</dbReference>
<dbReference type="NCBIfam" id="TIGR00278">
    <property type="entry name" value="membrane protein insertion efficiency factor YidD"/>
    <property type="match status" value="1"/>
</dbReference>
<dbReference type="PANTHER" id="PTHR33383">
    <property type="entry name" value="MEMBRANE PROTEIN INSERTION EFFICIENCY FACTOR-RELATED"/>
    <property type="match status" value="1"/>
</dbReference>
<dbReference type="PANTHER" id="PTHR33383:SF1">
    <property type="entry name" value="MEMBRANE PROTEIN INSERTION EFFICIENCY FACTOR-RELATED"/>
    <property type="match status" value="1"/>
</dbReference>
<dbReference type="Pfam" id="PF01809">
    <property type="entry name" value="YidD"/>
    <property type="match status" value="1"/>
</dbReference>
<dbReference type="SMART" id="SM01234">
    <property type="entry name" value="Haemolytic"/>
    <property type="match status" value="1"/>
</dbReference>
<comment type="function">
    <text evidence="1">Could be involved in insertion of integral membrane proteins into the membrane.</text>
</comment>
<comment type="subcellular location">
    <subcellularLocation>
        <location evidence="1">Cell inner membrane</location>
        <topology evidence="1">Peripheral membrane protein</topology>
        <orientation evidence="1">Cytoplasmic side</orientation>
    </subcellularLocation>
</comment>
<comment type="similarity">
    <text evidence="1">Belongs to the UPF0161 family.</text>
</comment>
<evidence type="ECO:0000255" key="1">
    <source>
        <dbReference type="HAMAP-Rule" id="MF_00386"/>
    </source>
</evidence>
<protein>
    <recommendedName>
        <fullName evidence="1">Putative membrane protein insertion efficiency factor</fullName>
    </recommendedName>
</protein>
<organism>
    <name type="scientific">Shewanella sp. (strain W3-18-1)</name>
    <dbReference type="NCBI Taxonomy" id="351745"/>
    <lineage>
        <taxon>Bacteria</taxon>
        <taxon>Pseudomonadati</taxon>
        <taxon>Pseudomonadota</taxon>
        <taxon>Gammaproteobacteria</taxon>
        <taxon>Alteromonadales</taxon>
        <taxon>Shewanellaceae</taxon>
        <taxon>Shewanella</taxon>
    </lineage>
</organism>
<keyword id="KW-0997">Cell inner membrane</keyword>
<keyword id="KW-1003">Cell membrane</keyword>
<keyword id="KW-0472">Membrane</keyword>
<proteinExistence type="inferred from homology"/>